<organism>
    <name type="scientific">Buchnera aphidicola subsp. Cinara cedri (strain Cc)</name>
    <dbReference type="NCBI Taxonomy" id="372461"/>
    <lineage>
        <taxon>Bacteria</taxon>
        <taxon>Pseudomonadati</taxon>
        <taxon>Pseudomonadota</taxon>
        <taxon>Gammaproteobacteria</taxon>
        <taxon>Enterobacterales</taxon>
        <taxon>Erwiniaceae</taxon>
        <taxon>Buchnera</taxon>
    </lineage>
</organism>
<proteinExistence type="inferred from homology"/>
<comment type="similarity">
    <text evidence="1">Belongs to the bacterial ribosomal protein bL34 family.</text>
</comment>
<reference key="1">
    <citation type="journal article" date="2006" name="Science">
        <title>A small microbial genome: the end of a long symbiotic relationship?</title>
        <authorList>
            <person name="Perez-Brocal V."/>
            <person name="Gil R."/>
            <person name="Ramos S."/>
            <person name="Lamelas A."/>
            <person name="Postigo M."/>
            <person name="Michelena J.M."/>
            <person name="Silva F.J."/>
            <person name="Moya A."/>
            <person name="Latorre A."/>
        </authorList>
    </citation>
    <scope>NUCLEOTIDE SEQUENCE [LARGE SCALE GENOMIC DNA]</scope>
    <source>
        <strain>Cc</strain>
    </source>
</reference>
<sequence>MKRTFQPSNIRRNRTHGFRARMSSKSGRNIISHRRSKLRSVLCV</sequence>
<protein>
    <recommendedName>
        <fullName evidence="1">Large ribosomal subunit protein bL34</fullName>
    </recommendedName>
    <alternativeName>
        <fullName evidence="2">50S ribosomal protein L34</fullName>
    </alternativeName>
</protein>
<keyword id="KW-1185">Reference proteome</keyword>
<keyword id="KW-0687">Ribonucleoprotein</keyword>
<keyword id="KW-0689">Ribosomal protein</keyword>
<evidence type="ECO:0000255" key="1">
    <source>
        <dbReference type="HAMAP-Rule" id="MF_00391"/>
    </source>
</evidence>
<evidence type="ECO:0000305" key="2"/>
<feature type="chain" id="PRO_1000013292" description="Large ribosomal subunit protein bL34">
    <location>
        <begin position="1"/>
        <end position="44"/>
    </location>
</feature>
<accession>Q058F8</accession>
<dbReference type="EMBL" id="CP000263">
    <property type="protein sequence ID" value="ABJ90491.1"/>
    <property type="molecule type" value="Genomic_DNA"/>
</dbReference>
<dbReference type="RefSeq" id="WP_011672410.1">
    <property type="nucleotide sequence ID" value="NC_008513.1"/>
</dbReference>
<dbReference type="SMR" id="Q058F8"/>
<dbReference type="STRING" id="372461.BCc_005"/>
<dbReference type="KEGG" id="bcc:BCc_005"/>
<dbReference type="eggNOG" id="COG0230">
    <property type="taxonomic scope" value="Bacteria"/>
</dbReference>
<dbReference type="HOGENOM" id="CLU_129938_2_0_6"/>
<dbReference type="OrthoDB" id="9804164at2"/>
<dbReference type="Proteomes" id="UP000000669">
    <property type="component" value="Chromosome"/>
</dbReference>
<dbReference type="GO" id="GO:1990904">
    <property type="term" value="C:ribonucleoprotein complex"/>
    <property type="evidence" value="ECO:0007669"/>
    <property type="project" value="UniProtKB-KW"/>
</dbReference>
<dbReference type="GO" id="GO:0005840">
    <property type="term" value="C:ribosome"/>
    <property type="evidence" value="ECO:0007669"/>
    <property type="project" value="UniProtKB-KW"/>
</dbReference>
<dbReference type="GO" id="GO:0003735">
    <property type="term" value="F:structural constituent of ribosome"/>
    <property type="evidence" value="ECO:0007669"/>
    <property type="project" value="InterPro"/>
</dbReference>
<dbReference type="GO" id="GO:0006412">
    <property type="term" value="P:translation"/>
    <property type="evidence" value="ECO:0007669"/>
    <property type="project" value="UniProtKB-UniRule"/>
</dbReference>
<dbReference type="FunFam" id="1.10.287.3980:FF:000001">
    <property type="entry name" value="Mitochondrial ribosomal protein L34"/>
    <property type="match status" value="1"/>
</dbReference>
<dbReference type="Gene3D" id="1.10.287.3980">
    <property type="match status" value="1"/>
</dbReference>
<dbReference type="HAMAP" id="MF_00391">
    <property type="entry name" value="Ribosomal_bL34"/>
    <property type="match status" value="1"/>
</dbReference>
<dbReference type="InterPro" id="IPR000271">
    <property type="entry name" value="Ribosomal_bL34"/>
</dbReference>
<dbReference type="InterPro" id="IPR020939">
    <property type="entry name" value="Ribosomal_bL34_CS"/>
</dbReference>
<dbReference type="NCBIfam" id="TIGR01030">
    <property type="entry name" value="rpmH_bact"/>
    <property type="match status" value="1"/>
</dbReference>
<dbReference type="PANTHER" id="PTHR14503:SF4">
    <property type="entry name" value="LARGE RIBOSOMAL SUBUNIT PROTEIN BL34M"/>
    <property type="match status" value="1"/>
</dbReference>
<dbReference type="PANTHER" id="PTHR14503">
    <property type="entry name" value="MITOCHONDRIAL RIBOSOMAL PROTEIN 34 FAMILY MEMBER"/>
    <property type="match status" value="1"/>
</dbReference>
<dbReference type="Pfam" id="PF00468">
    <property type="entry name" value="Ribosomal_L34"/>
    <property type="match status" value="1"/>
</dbReference>
<dbReference type="PROSITE" id="PS00784">
    <property type="entry name" value="RIBOSOMAL_L34"/>
    <property type="match status" value="1"/>
</dbReference>
<gene>
    <name evidence="1" type="primary">rpmH</name>
    <name type="ordered locus">BCc_005</name>
</gene>
<name>RL34_BUCCC</name>